<accession>Q3AQK8</accession>
<dbReference type="EMBL" id="CP000108">
    <property type="protein sequence ID" value="ABB28717.1"/>
    <property type="molecule type" value="Genomic_DNA"/>
</dbReference>
<dbReference type="SMR" id="Q3AQK8"/>
<dbReference type="STRING" id="340177.Cag_1461"/>
<dbReference type="KEGG" id="cch:Cag_1461"/>
<dbReference type="eggNOG" id="COG0858">
    <property type="taxonomic scope" value="Bacteria"/>
</dbReference>
<dbReference type="HOGENOM" id="CLU_089475_4_0_10"/>
<dbReference type="OrthoDB" id="9811910at2"/>
<dbReference type="GO" id="GO:0005829">
    <property type="term" value="C:cytosol"/>
    <property type="evidence" value="ECO:0007669"/>
    <property type="project" value="TreeGrafter"/>
</dbReference>
<dbReference type="GO" id="GO:0043024">
    <property type="term" value="F:ribosomal small subunit binding"/>
    <property type="evidence" value="ECO:0007669"/>
    <property type="project" value="TreeGrafter"/>
</dbReference>
<dbReference type="GO" id="GO:0030490">
    <property type="term" value="P:maturation of SSU-rRNA"/>
    <property type="evidence" value="ECO:0007669"/>
    <property type="project" value="UniProtKB-UniRule"/>
</dbReference>
<dbReference type="Gene3D" id="3.30.300.20">
    <property type="match status" value="1"/>
</dbReference>
<dbReference type="HAMAP" id="MF_00003">
    <property type="entry name" value="RbfA"/>
    <property type="match status" value="1"/>
</dbReference>
<dbReference type="InterPro" id="IPR015946">
    <property type="entry name" value="KH_dom-like_a/b"/>
</dbReference>
<dbReference type="InterPro" id="IPR000238">
    <property type="entry name" value="RbfA"/>
</dbReference>
<dbReference type="InterPro" id="IPR023799">
    <property type="entry name" value="RbfA_dom_sf"/>
</dbReference>
<dbReference type="NCBIfam" id="TIGR00082">
    <property type="entry name" value="rbfA"/>
    <property type="match status" value="1"/>
</dbReference>
<dbReference type="PANTHER" id="PTHR33515">
    <property type="entry name" value="RIBOSOME-BINDING FACTOR A, CHLOROPLASTIC-RELATED"/>
    <property type="match status" value="1"/>
</dbReference>
<dbReference type="PANTHER" id="PTHR33515:SF1">
    <property type="entry name" value="RIBOSOME-BINDING FACTOR A, CHLOROPLASTIC-RELATED"/>
    <property type="match status" value="1"/>
</dbReference>
<dbReference type="Pfam" id="PF02033">
    <property type="entry name" value="RBFA"/>
    <property type="match status" value="1"/>
</dbReference>
<dbReference type="SUPFAM" id="SSF89919">
    <property type="entry name" value="Ribosome-binding factor A, RbfA"/>
    <property type="match status" value="1"/>
</dbReference>
<protein>
    <recommendedName>
        <fullName evidence="1">Ribosome-binding factor A</fullName>
    </recommendedName>
</protein>
<sequence>MSRRTERVASLLQHELGAIFQLELPRTPIVTIVEVKVTVDLGIARVYISTIGTPEEQAAIMAHLQEQNKYIRKLLSQRIRHQFRRIPELEFYEDHLYEHARHIEQLLSQVRKAPVDDAETPLD</sequence>
<proteinExistence type="inferred from homology"/>
<keyword id="KW-0963">Cytoplasm</keyword>
<keyword id="KW-0690">Ribosome biogenesis</keyword>
<organism>
    <name type="scientific">Chlorobium chlorochromatii (strain CaD3)</name>
    <dbReference type="NCBI Taxonomy" id="340177"/>
    <lineage>
        <taxon>Bacteria</taxon>
        <taxon>Pseudomonadati</taxon>
        <taxon>Chlorobiota</taxon>
        <taxon>Chlorobiia</taxon>
        <taxon>Chlorobiales</taxon>
        <taxon>Chlorobiaceae</taxon>
        <taxon>Chlorobium/Pelodictyon group</taxon>
        <taxon>Chlorobium</taxon>
    </lineage>
</organism>
<gene>
    <name evidence="1" type="primary">rbfA</name>
    <name type="ordered locus">Cag_1461</name>
</gene>
<comment type="function">
    <text evidence="1">One of several proteins that assist in the late maturation steps of the functional core of the 30S ribosomal subunit. Associates with free 30S ribosomal subunits (but not with 30S subunits that are part of 70S ribosomes or polysomes). Required for efficient processing of 16S rRNA. May interact with the 5'-terminal helix region of 16S rRNA.</text>
</comment>
<comment type="subunit">
    <text evidence="1">Monomer. Binds 30S ribosomal subunits, but not 50S ribosomal subunits or 70S ribosomes.</text>
</comment>
<comment type="subcellular location">
    <subcellularLocation>
        <location evidence="1">Cytoplasm</location>
    </subcellularLocation>
</comment>
<comment type="similarity">
    <text evidence="1">Belongs to the RbfA family.</text>
</comment>
<feature type="chain" id="PRO_1000000088" description="Ribosome-binding factor A">
    <location>
        <begin position="1"/>
        <end position="123"/>
    </location>
</feature>
<reference key="1">
    <citation type="submission" date="2005-08" db="EMBL/GenBank/DDBJ databases">
        <title>Complete sequence of Chlorobium chlorochromatii CaD3.</title>
        <authorList>
            <consortium name="US DOE Joint Genome Institute"/>
            <person name="Copeland A."/>
            <person name="Lucas S."/>
            <person name="Lapidus A."/>
            <person name="Barry K."/>
            <person name="Detter J.C."/>
            <person name="Glavina T."/>
            <person name="Hammon N."/>
            <person name="Israni S."/>
            <person name="Pitluck S."/>
            <person name="Bryant D."/>
            <person name="Schmutz J."/>
            <person name="Larimer F."/>
            <person name="Land M."/>
            <person name="Kyrpides N."/>
            <person name="Ivanova N."/>
            <person name="Richardson P."/>
        </authorList>
    </citation>
    <scope>NUCLEOTIDE SEQUENCE [LARGE SCALE GENOMIC DNA]</scope>
    <source>
        <strain>CaD3</strain>
    </source>
</reference>
<name>RBFA_CHLCH</name>
<evidence type="ECO:0000255" key="1">
    <source>
        <dbReference type="HAMAP-Rule" id="MF_00003"/>
    </source>
</evidence>